<proteinExistence type="inferred from homology"/>
<name>HIS5_LISIN</name>
<organism>
    <name type="scientific">Listeria innocua serovar 6a (strain ATCC BAA-680 / CLIP 11262)</name>
    <dbReference type="NCBI Taxonomy" id="272626"/>
    <lineage>
        <taxon>Bacteria</taxon>
        <taxon>Bacillati</taxon>
        <taxon>Bacillota</taxon>
        <taxon>Bacilli</taxon>
        <taxon>Bacillales</taxon>
        <taxon>Listeriaceae</taxon>
        <taxon>Listeria</taxon>
    </lineage>
</organism>
<keyword id="KW-0028">Amino-acid biosynthesis</keyword>
<keyword id="KW-0963">Cytoplasm</keyword>
<keyword id="KW-0315">Glutamine amidotransferase</keyword>
<keyword id="KW-0368">Histidine biosynthesis</keyword>
<keyword id="KW-0378">Hydrolase</keyword>
<keyword id="KW-0456">Lyase</keyword>
<evidence type="ECO:0000255" key="1">
    <source>
        <dbReference type="HAMAP-Rule" id="MF_00278"/>
    </source>
</evidence>
<dbReference type="EC" id="4.3.2.10" evidence="1"/>
<dbReference type="EC" id="3.5.1.2" evidence="1"/>
<dbReference type="EMBL" id="AL596165">
    <property type="protein sequence ID" value="CAC95806.1"/>
    <property type="molecule type" value="Genomic_DNA"/>
</dbReference>
<dbReference type="PIR" id="AF1504">
    <property type="entry name" value="AF1504"/>
</dbReference>
<dbReference type="RefSeq" id="WP_003770710.1">
    <property type="nucleotide sequence ID" value="NC_003212.1"/>
</dbReference>
<dbReference type="SMR" id="Q92E86"/>
<dbReference type="STRING" id="272626.gene:17564900"/>
<dbReference type="GeneID" id="93234022"/>
<dbReference type="KEGG" id="lin:hisH"/>
<dbReference type="eggNOG" id="COG0118">
    <property type="taxonomic scope" value="Bacteria"/>
</dbReference>
<dbReference type="HOGENOM" id="CLU_071837_2_2_9"/>
<dbReference type="OrthoDB" id="9807137at2"/>
<dbReference type="UniPathway" id="UPA00031">
    <property type="reaction ID" value="UER00010"/>
</dbReference>
<dbReference type="Proteomes" id="UP000002513">
    <property type="component" value="Chromosome"/>
</dbReference>
<dbReference type="GO" id="GO:0005737">
    <property type="term" value="C:cytoplasm"/>
    <property type="evidence" value="ECO:0007669"/>
    <property type="project" value="UniProtKB-SubCell"/>
</dbReference>
<dbReference type="GO" id="GO:0004359">
    <property type="term" value="F:glutaminase activity"/>
    <property type="evidence" value="ECO:0007669"/>
    <property type="project" value="UniProtKB-EC"/>
</dbReference>
<dbReference type="GO" id="GO:0000107">
    <property type="term" value="F:imidazoleglycerol-phosphate synthase activity"/>
    <property type="evidence" value="ECO:0007669"/>
    <property type="project" value="UniProtKB-UniRule"/>
</dbReference>
<dbReference type="GO" id="GO:0016829">
    <property type="term" value="F:lyase activity"/>
    <property type="evidence" value="ECO:0007669"/>
    <property type="project" value="UniProtKB-KW"/>
</dbReference>
<dbReference type="GO" id="GO:0000105">
    <property type="term" value="P:L-histidine biosynthetic process"/>
    <property type="evidence" value="ECO:0007669"/>
    <property type="project" value="UniProtKB-UniRule"/>
</dbReference>
<dbReference type="CDD" id="cd01748">
    <property type="entry name" value="GATase1_IGP_Synthase"/>
    <property type="match status" value="1"/>
</dbReference>
<dbReference type="FunFam" id="3.40.50.880:FF:000028">
    <property type="entry name" value="Imidazole glycerol phosphate synthase subunit HisH"/>
    <property type="match status" value="1"/>
</dbReference>
<dbReference type="Gene3D" id="3.40.50.880">
    <property type="match status" value="1"/>
</dbReference>
<dbReference type="HAMAP" id="MF_00278">
    <property type="entry name" value="HisH"/>
    <property type="match status" value="1"/>
</dbReference>
<dbReference type="InterPro" id="IPR029062">
    <property type="entry name" value="Class_I_gatase-like"/>
</dbReference>
<dbReference type="InterPro" id="IPR017926">
    <property type="entry name" value="GATASE"/>
</dbReference>
<dbReference type="InterPro" id="IPR010139">
    <property type="entry name" value="Imidazole-glycPsynth_HisH"/>
</dbReference>
<dbReference type="NCBIfam" id="TIGR01855">
    <property type="entry name" value="IMP_synth_hisH"/>
    <property type="match status" value="1"/>
</dbReference>
<dbReference type="PANTHER" id="PTHR42701">
    <property type="entry name" value="IMIDAZOLE GLYCEROL PHOSPHATE SYNTHASE SUBUNIT HISH"/>
    <property type="match status" value="1"/>
</dbReference>
<dbReference type="PANTHER" id="PTHR42701:SF1">
    <property type="entry name" value="IMIDAZOLE GLYCEROL PHOSPHATE SYNTHASE SUBUNIT HISH"/>
    <property type="match status" value="1"/>
</dbReference>
<dbReference type="Pfam" id="PF00117">
    <property type="entry name" value="GATase"/>
    <property type="match status" value="1"/>
</dbReference>
<dbReference type="PIRSF" id="PIRSF000495">
    <property type="entry name" value="Amidotransf_hisH"/>
    <property type="match status" value="1"/>
</dbReference>
<dbReference type="SUPFAM" id="SSF52317">
    <property type="entry name" value="Class I glutamine amidotransferase-like"/>
    <property type="match status" value="1"/>
</dbReference>
<dbReference type="PROSITE" id="PS51273">
    <property type="entry name" value="GATASE_TYPE_1"/>
    <property type="match status" value="1"/>
</dbReference>
<feature type="chain" id="PRO_0000152389" description="Imidazole glycerol phosphate synthase subunit HisH">
    <location>
        <begin position="1"/>
        <end position="208"/>
    </location>
</feature>
<feature type="domain" description="Glutamine amidotransferase type-1" evidence="1">
    <location>
        <begin position="1"/>
        <end position="206"/>
    </location>
</feature>
<feature type="active site" description="Nucleophile" evidence="1">
    <location>
        <position position="79"/>
    </location>
</feature>
<feature type="active site" evidence="1">
    <location>
        <position position="181"/>
    </location>
</feature>
<feature type="active site" evidence="1">
    <location>
        <position position="183"/>
    </location>
</feature>
<sequence>MIVIIDYDTGNTKSISKALDFIGLQNKISSNHAEILQADGVILPGVGAFPEAMQELGRRGLDVTLKEMAESGKPMLGVCLGMQLLLESSDEHLFTKGLGLIPGHVEKLPDEPGFAVPHMGWNQLEIKRSTPLTKKLGGEYVYYVHSYYANCPNEYIIATSGYSVEVPSMINKGNIYGAQFHPEKSGQIGLEILKGFKEVTESCKSSQQ</sequence>
<gene>
    <name evidence="1" type="primary">hisH</name>
    <name type="ordered locus">lin0574</name>
</gene>
<reference key="1">
    <citation type="journal article" date="2001" name="Science">
        <title>Comparative genomics of Listeria species.</title>
        <authorList>
            <person name="Glaser P."/>
            <person name="Frangeul L."/>
            <person name="Buchrieser C."/>
            <person name="Rusniok C."/>
            <person name="Amend A."/>
            <person name="Baquero F."/>
            <person name="Berche P."/>
            <person name="Bloecker H."/>
            <person name="Brandt P."/>
            <person name="Chakraborty T."/>
            <person name="Charbit A."/>
            <person name="Chetouani F."/>
            <person name="Couve E."/>
            <person name="de Daruvar A."/>
            <person name="Dehoux P."/>
            <person name="Domann E."/>
            <person name="Dominguez-Bernal G."/>
            <person name="Duchaud E."/>
            <person name="Durant L."/>
            <person name="Dussurget O."/>
            <person name="Entian K.-D."/>
            <person name="Fsihi H."/>
            <person name="Garcia-del Portillo F."/>
            <person name="Garrido P."/>
            <person name="Gautier L."/>
            <person name="Goebel W."/>
            <person name="Gomez-Lopez N."/>
            <person name="Hain T."/>
            <person name="Hauf J."/>
            <person name="Jackson D."/>
            <person name="Jones L.-M."/>
            <person name="Kaerst U."/>
            <person name="Kreft J."/>
            <person name="Kuhn M."/>
            <person name="Kunst F."/>
            <person name="Kurapkat G."/>
            <person name="Madueno E."/>
            <person name="Maitournam A."/>
            <person name="Mata Vicente J."/>
            <person name="Ng E."/>
            <person name="Nedjari H."/>
            <person name="Nordsiek G."/>
            <person name="Novella S."/>
            <person name="de Pablos B."/>
            <person name="Perez-Diaz J.-C."/>
            <person name="Purcell R."/>
            <person name="Remmel B."/>
            <person name="Rose M."/>
            <person name="Schlueter T."/>
            <person name="Simoes N."/>
            <person name="Tierrez A."/>
            <person name="Vazquez-Boland J.-A."/>
            <person name="Voss H."/>
            <person name="Wehland J."/>
            <person name="Cossart P."/>
        </authorList>
    </citation>
    <scope>NUCLEOTIDE SEQUENCE [LARGE SCALE GENOMIC DNA]</scope>
    <source>
        <strain>ATCC BAA-680 / CLIP 11262</strain>
    </source>
</reference>
<protein>
    <recommendedName>
        <fullName evidence="1">Imidazole glycerol phosphate synthase subunit HisH</fullName>
        <ecNumber evidence="1">4.3.2.10</ecNumber>
    </recommendedName>
    <alternativeName>
        <fullName evidence="1">IGP synthase glutaminase subunit</fullName>
        <ecNumber evidence="1">3.5.1.2</ecNumber>
    </alternativeName>
    <alternativeName>
        <fullName evidence="1">IGP synthase subunit HisH</fullName>
    </alternativeName>
    <alternativeName>
        <fullName evidence="1">ImGP synthase subunit HisH</fullName>
        <shortName evidence="1">IGPS subunit HisH</shortName>
    </alternativeName>
</protein>
<accession>Q92E86</accession>
<comment type="function">
    <text evidence="1">IGPS catalyzes the conversion of PRFAR and glutamine to IGP, AICAR and glutamate. The HisH subunit catalyzes the hydrolysis of glutamine to glutamate and ammonia as part of the synthesis of IGP and AICAR. The resulting ammonia molecule is channeled to the active site of HisF.</text>
</comment>
<comment type="catalytic activity">
    <reaction evidence="1">
        <text>5-[(5-phospho-1-deoxy-D-ribulos-1-ylimino)methylamino]-1-(5-phospho-beta-D-ribosyl)imidazole-4-carboxamide + L-glutamine = D-erythro-1-(imidazol-4-yl)glycerol 3-phosphate + 5-amino-1-(5-phospho-beta-D-ribosyl)imidazole-4-carboxamide + L-glutamate + H(+)</text>
        <dbReference type="Rhea" id="RHEA:24793"/>
        <dbReference type="ChEBI" id="CHEBI:15378"/>
        <dbReference type="ChEBI" id="CHEBI:29985"/>
        <dbReference type="ChEBI" id="CHEBI:58278"/>
        <dbReference type="ChEBI" id="CHEBI:58359"/>
        <dbReference type="ChEBI" id="CHEBI:58475"/>
        <dbReference type="ChEBI" id="CHEBI:58525"/>
        <dbReference type="EC" id="4.3.2.10"/>
    </reaction>
</comment>
<comment type="catalytic activity">
    <reaction evidence="1">
        <text>L-glutamine + H2O = L-glutamate + NH4(+)</text>
        <dbReference type="Rhea" id="RHEA:15889"/>
        <dbReference type="ChEBI" id="CHEBI:15377"/>
        <dbReference type="ChEBI" id="CHEBI:28938"/>
        <dbReference type="ChEBI" id="CHEBI:29985"/>
        <dbReference type="ChEBI" id="CHEBI:58359"/>
        <dbReference type="EC" id="3.5.1.2"/>
    </reaction>
</comment>
<comment type="pathway">
    <text evidence="1">Amino-acid biosynthesis; L-histidine biosynthesis; L-histidine from 5-phospho-alpha-D-ribose 1-diphosphate: step 5/9.</text>
</comment>
<comment type="subunit">
    <text evidence="1">Heterodimer of HisH and HisF.</text>
</comment>
<comment type="subcellular location">
    <subcellularLocation>
        <location evidence="1">Cytoplasm</location>
    </subcellularLocation>
</comment>